<comment type="function">
    <text evidence="1">Catalyzes the NAD-dependent conversion of D-erythrose 4-phosphate to 4-phosphoerythronate.</text>
</comment>
<comment type="catalytic activity">
    <reaction evidence="1">
        <text>D-erythrose 4-phosphate + NAD(+) + H2O = 4-phospho-D-erythronate + NADH + 2 H(+)</text>
        <dbReference type="Rhea" id="RHEA:12056"/>
        <dbReference type="ChEBI" id="CHEBI:15377"/>
        <dbReference type="ChEBI" id="CHEBI:15378"/>
        <dbReference type="ChEBI" id="CHEBI:16897"/>
        <dbReference type="ChEBI" id="CHEBI:57540"/>
        <dbReference type="ChEBI" id="CHEBI:57945"/>
        <dbReference type="ChEBI" id="CHEBI:58766"/>
        <dbReference type="EC" id="1.2.1.72"/>
    </reaction>
</comment>
<comment type="pathway">
    <text evidence="1">Cofactor biosynthesis; pyridoxine 5'-phosphate biosynthesis; pyridoxine 5'-phosphate from D-erythrose 4-phosphate: step 1/5.</text>
</comment>
<comment type="subunit">
    <text evidence="1">Homotetramer.</text>
</comment>
<comment type="subcellular location">
    <subcellularLocation>
        <location evidence="1">Cytoplasm</location>
    </subcellularLocation>
</comment>
<comment type="similarity">
    <text evidence="1">Belongs to the glyceraldehyde-3-phosphate dehydrogenase family. Epd subfamily.</text>
</comment>
<dbReference type="EC" id="1.2.1.72" evidence="1"/>
<dbReference type="EMBL" id="CU468135">
    <property type="protein sequence ID" value="CAO97861.1"/>
    <property type="molecule type" value="Genomic_DNA"/>
</dbReference>
<dbReference type="RefSeq" id="WP_012442518.1">
    <property type="nucleotide sequence ID" value="NC_010694.1"/>
</dbReference>
<dbReference type="SMR" id="B2VF24"/>
<dbReference type="STRING" id="465817.ETA_28150"/>
<dbReference type="KEGG" id="eta:ETA_28150"/>
<dbReference type="eggNOG" id="COG0057">
    <property type="taxonomic scope" value="Bacteria"/>
</dbReference>
<dbReference type="HOGENOM" id="CLU_030140_0_2_6"/>
<dbReference type="OrthoDB" id="9803304at2"/>
<dbReference type="UniPathway" id="UPA00244">
    <property type="reaction ID" value="UER00309"/>
</dbReference>
<dbReference type="Proteomes" id="UP000001726">
    <property type="component" value="Chromosome"/>
</dbReference>
<dbReference type="GO" id="GO:0005737">
    <property type="term" value="C:cytoplasm"/>
    <property type="evidence" value="ECO:0007669"/>
    <property type="project" value="UniProtKB-SubCell"/>
</dbReference>
<dbReference type="GO" id="GO:0048001">
    <property type="term" value="F:erythrose-4-phosphate dehydrogenase activity"/>
    <property type="evidence" value="ECO:0007669"/>
    <property type="project" value="UniProtKB-UniRule"/>
</dbReference>
<dbReference type="GO" id="GO:0051287">
    <property type="term" value="F:NAD binding"/>
    <property type="evidence" value="ECO:0007669"/>
    <property type="project" value="InterPro"/>
</dbReference>
<dbReference type="GO" id="GO:0042823">
    <property type="term" value="P:pyridoxal phosphate biosynthetic process"/>
    <property type="evidence" value="ECO:0007669"/>
    <property type="project" value="UniProtKB-UniRule"/>
</dbReference>
<dbReference type="GO" id="GO:0008615">
    <property type="term" value="P:pyridoxine biosynthetic process"/>
    <property type="evidence" value="ECO:0007669"/>
    <property type="project" value="UniProtKB-UniRule"/>
</dbReference>
<dbReference type="CDD" id="cd23937">
    <property type="entry name" value="GAPDH_C_E4PDH"/>
    <property type="match status" value="1"/>
</dbReference>
<dbReference type="CDD" id="cd17892">
    <property type="entry name" value="GAPDH_N_E4PDH"/>
    <property type="match status" value="1"/>
</dbReference>
<dbReference type="FunFam" id="3.30.360.10:FF:000007">
    <property type="entry name" value="D-erythrose-4-phosphate dehydrogenase"/>
    <property type="match status" value="1"/>
</dbReference>
<dbReference type="FunFam" id="3.40.50.720:FF:000001">
    <property type="entry name" value="Glyceraldehyde-3-phosphate dehydrogenase"/>
    <property type="match status" value="1"/>
</dbReference>
<dbReference type="Gene3D" id="3.30.360.10">
    <property type="entry name" value="Dihydrodipicolinate Reductase, domain 2"/>
    <property type="match status" value="1"/>
</dbReference>
<dbReference type="Gene3D" id="3.40.50.720">
    <property type="entry name" value="NAD(P)-binding Rossmann-like Domain"/>
    <property type="match status" value="1"/>
</dbReference>
<dbReference type="HAMAP" id="MF_01640">
    <property type="entry name" value="E4P_dehydrog"/>
    <property type="match status" value="1"/>
</dbReference>
<dbReference type="InterPro" id="IPR006422">
    <property type="entry name" value="E4P_DH_bac"/>
</dbReference>
<dbReference type="InterPro" id="IPR020831">
    <property type="entry name" value="GlycerAld/Erythrose_P_DH"/>
</dbReference>
<dbReference type="InterPro" id="IPR020830">
    <property type="entry name" value="GlycerAld_3-P_DH_AS"/>
</dbReference>
<dbReference type="InterPro" id="IPR020829">
    <property type="entry name" value="GlycerAld_3-P_DH_cat"/>
</dbReference>
<dbReference type="InterPro" id="IPR020828">
    <property type="entry name" value="GlycerAld_3-P_DH_NAD(P)-bd"/>
</dbReference>
<dbReference type="InterPro" id="IPR036291">
    <property type="entry name" value="NAD(P)-bd_dom_sf"/>
</dbReference>
<dbReference type="NCBIfam" id="TIGR01532">
    <property type="entry name" value="E4PD_g-proteo"/>
    <property type="match status" value="1"/>
</dbReference>
<dbReference type="NCBIfam" id="NF010058">
    <property type="entry name" value="PRK13535.1"/>
    <property type="match status" value="1"/>
</dbReference>
<dbReference type="PANTHER" id="PTHR43148">
    <property type="entry name" value="GLYCERALDEHYDE-3-PHOSPHATE DEHYDROGENASE 2"/>
    <property type="match status" value="1"/>
</dbReference>
<dbReference type="Pfam" id="PF02800">
    <property type="entry name" value="Gp_dh_C"/>
    <property type="match status" value="1"/>
</dbReference>
<dbReference type="Pfam" id="PF00044">
    <property type="entry name" value="Gp_dh_N"/>
    <property type="match status" value="1"/>
</dbReference>
<dbReference type="PIRSF" id="PIRSF000149">
    <property type="entry name" value="GAP_DH"/>
    <property type="match status" value="1"/>
</dbReference>
<dbReference type="PRINTS" id="PR00078">
    <property type="entry name" value="G3PDHDRGNASE"/>
</dbReference>
<dbReference type="SMART" id="SM00846">
    <property type="entry name" value="Gp_dh_N"/>
    <property type="match status" value="1"/>
</dbReference>
<dbReference type="SUPFAM" id="SSF55347">
    <property type="entry name" value="Glyceraldehyde-3-phosphate dehydrogenase-like, C-terminal domain"/>
    <property type="match status" value="1"/>
</dbReference>
<dbReference type="SUPFAM" id="SSF51735">
    <property type="entry name" value="NAD(P)-binding Rossmann-fold domains"/>
    <property type="match status" value="1"/>
</dbReference>
<dbReference type="PROSITE" id="PS00071">
    <property type="entry name" value="GAPDH"/>
    <property type="match status" value="1"/>
</dbReference>
<sequence>MTVRIAINGFGRIGRNVLRALYETGRRAEISAVAINELADAAGMAHLLKYDTSHGRFAWDVRQERDLLTVGDDTIRLLHIPEIGSLPWRELNVDIVLDCTGVYGSRADGEAHLKAGARKVLFSHPGGHDLDATVVYGVNEKELLPEHLLVSNASCTTNCIIPIIKLLDDAWGIESGTVTTIHSAMHDQQVIDAYHPDLRRTRAASQSIIPVDTRLAAGITRIFPKFNDRFEAIAVRVPTINVTAIDLSVSVRDAVKASEVNALLHSASLGAFSGIVDYTELPLVSIDFNHDPHSAIVDGTQTRVSGQHLIKTLVWCDNEWGFANRMIDTTLAMAASGFSLDAAASIKL</sequence>
<protein>
    <recommendedName>
        <fullName evidence="1">D-erythrose-4-phosphate dehydrogenase</fullName>
        <shortName evidence="1">E4PDH</shortName>
        <ecNumber evidence="1">1.2.1.72</ecNumber>
    </recommendedName>
</protein>
<keyword id="KW-0963">Cytoplasm</keyword>
<keyword id="KW-0520">NAD</keyword>
<keyword id="KW-0560">Oxidoreductase</keyword>
<keyword id="KW-0664">Pyridoxine biosynthesis</keyword>
<keyword id="KW-1185">Reference proteome</keyword>
<gene>
    <name evidence="1" type="primary">epd</name>
    <name type="ordered locus">ETA_28150</name>
</gene>
<organism>
    <name type="scientific">Erwinia tasmaniensis (strain DSM 17950 / CFBP 7177 / CIP 109463 / NCPPB 4357 / Et1/99)</name>
    <dbReference type="NCBI Taxonomy" id="465817"/>
    <lineage>
        <taxon>Bacteria</taxon>
        <taxon>Pseudomonadati</taxon>
        <taxon>Pseudomonadota</taxon>
        <taxon>Gammaproteobacteria</taxon>
        <taxon>Enterobacterales</taxon>
        <taxon>Erwiniaceae</taxon>
        <taxon>Erwinia</taxon>
    </lineage>
</organism>
<accession>B2VF24</accession>
<evidence type="ECO:0000255" key="1">
    <source>
        <dbReference type="HAMAP-Rule" id="MF_01640"/>
    </source>
</evidence>
<feature type="chain" id="PRO_1000186828" description="D-erythrose-4-phosphate dehydrogenase">
    <location>
        <begin position="1"/>
        <end position="348"/>
    </location>
</feature>
<feature type="active site" description="Nucleophile" evidence="1">
    <location>
        <position position="155"/>
    </location>
</feature>
<feature type="binding site" evidence="1">
    <location>
        <begin position="12"/>
        <end position="13"/>
    </location>
    <ligand>
        <name>NAD(+)</name>
        <dbReference type="ChEBI" id="CHEBI:57540"/>
    </ligand>
</feature>
<feature type="binding site" evidence="1">
    <location>
        <begin position="154"/>
        <end position="156"/>
    </location>
    <ligand>
        <name>substrate</name>
    </ligand>
</feature>
<feature type="binding site" evidence="1">
    <location>
        <position position="200"/>
    </location>
    <ligand>
        <name>substrate</name>
    </ligand>
</feature>
<feature type="binding site" evidence="1">
    <location>
        <begin position="213"/>
        <end position="214"/>
    </location>
    <ligand>
        <name>substrate</name>
    </ligand>
</feature>
<feature type="binding site" evidence="1">
    <location>
        <position position="236"/>
    </location>
    <ligand>
        <name>substrate</name>
    </ligand>
</feature>
<feature type="binding site" evidence="1">
    <location>
        <position position="318"/>
    </location>
    <ligand>
        <name>NAD(+)</name>
        <dbReference type="ChEBI" id="CHEBI:57540"/>
    </ligand>
</feature>
<feature type="site" description="Activates thiol group during catalysis" evidence="1">
    <location>
        <position position="182"/>
    </location>
</feature>
<name>E4PD_ERWT9</name>
<reference key="1">
    <citation type="journal article" date="2008" name="Environ. Microbiol.">
        <title>The genome of Erwinia tasmaniensis strain Et1/99, a non-pathogenic bacterium in the genus Erwinia.</title>
        <authorList>
            <person name="Kube M."/>
            <person name="Migdoll A.M."/>
            <person name="Mueller I."/>
            <person name="Kuhl H."/>
            <person name="Beck A."/>
            <person name="Reinhardt R."/>
            <person name="Geider K."/>
        </authorList>
    </citation>
    <scope>NUCLEOTIDE SEQUENCE [LARGE SCALE GENOMIC DNA]</scope>
    <source>
        <strain>DSM 17950 / CFBP 7177 / CIP 109463 / NCPPB 4357 / Et1/99</strain>
    </source>
</reference>
<proteinExistence type="inferred from homology"/>